<dbReference type="EC" id="3.1.4.14" evidence="1"/>
<dbReference type="EMBL" id="CP000826">
    <property type="protein sequence ID" value="ABV40163.1"/>
    <property type="molecule type" value="Genomic_DNA"/>
</dbReference>
<dbReference type="STRING" id="399741.Spro_1059"/>
<dbReference type="KEGG" id="spe:Spro_1059"/>
<dbReference type="eggNOG" id="COG3124">
    <property type="taxonomic scope" value="Bacteria"/>
</dbReference>
<dbReference type="HOGENOM" id="CLU_099370_1_0_6"/>
<dbReference type="OrthoDB" id="8442777at2"/>
<dbReference type="GO" id="GO:0008770">
    <property type="term" value="F:[acyl-carrier-protein] phosphodiesterase activity"/>
    <property type="evidence" value="ECO:0007669"/>
    <property type="project" value="UniProtKB-UniRule"/>
</dbReference>
<dbReference type="GO" id="GO:0006633">
    <property type="term" value="P:fatty acid biosynthetic process"/>
    <property type="evidence" value="ECO:0007669"/>
    <property type="project" value="UniProtKB-UniRule"/>
</dbReference>
<dbReference type="HAMAP" id="MF_01950">
    <property type="entry name" value="AcpH"/>
    <property type="match status" value="1"/>
</dbReference>
<dbReference type="InterPro" id="IPR007431">
    <property type="entry name" value="ACP_PD"/>
</dbReference>
<dbReference type="InterPro" id="IPR023491">
    <property type="entry name" value="ACP_phosphodiesterase_gpbac"/>
</dbReference>
<dbReference type="PANTHER" id="PTHR38764">
    <property type="entry name" value="ACYL CARRIER PROTEIN PHOSPHODIESTERASE"/>
    <property type="match status" value="1"/>
</dbReference>
<dbReference type="PANTHER" id="PTHR38764:SF1">
    <property type="entry name" value="ACYL CARRIER PROTEIN PHOSPHODIESTERASE"/>
    <property type="match status" value="1"/>
</dbReference>
<dbReference type="Pfam" id="PF04336">
    <property type="entry name" value="ACP_PD"/>
    <property type="match status" value="1"/>
</dbReference>
<dbReference type="PIRSF" id="PIRSF011489">
    <property type="entry name" value="DUF479"/>
    <property type="match status" value="1"/>
</dbReference>
<feature type="chain" id="PRO_1000070627" description="Acyl carrier protein phosphodiesterase">
    <location>
        <begin position="1"/>
        <end position="193"/>
    </location>
</feature>
<protein>
    <recommendedName>
        <fullName evidence="1">Acyl carrier protein phosphodiesterase</fullName>
        <shortName evidence="1">ACP phosphodiesterase</shortName>
        <ecNumber evidence="1">3.1.4.14</ecNumber>
    </recommendedName>
</protein>
<keyword id="KW-0275">Fatty acid biosynthesis</keyword>
<keyword id="KW-0276">Fatty acid metabolism</keyword>
<keyword id="KW-0378">Hydrolase</keyword>
<keyword id="KW-0444">Lipid biosynthesis</keyword>
<keyword id="KW-0443">Lipid metabolism</keyword>
<sequence length="193" mass="22230">MNYLAHLHLASLAESSLLGNLLADFVRGNPAGEYNPAVVAGIMMHRRVDVLTDNLPQVRACRAYFSEEHRRVAPITLDVVWDHFLARHWQQLEPSLSLPGFTQQAQSQILPHLPLTPPRFQNLNGYIWPERWLERYAELPFIGNVLAGMASRRPRLAALAGSFADVERNYHQLETQFWQFYPQMMQQAKDKQL</sequence>
<comment type="function">
    <text evidence="1">Converts holo-ACP to apo-ACP by hydrolytic cleavage of the phosphopantetheine prosthetic group from ACP.</text>
</comment>
<comment type="catalytic activity">
    <reaction evidence="1">
        <text>holo-[ACP] + H2O = apo-[ACP] + (R)-4'-phosphopantetheine + H(+)</text>
        <dbReference type="Rhea" id="RHEA:20537"/>
        <dbReference type="Rhea" id="RHEA-COMP:9685"/>
        <dbReference type="Rhea" id="RHEA-COMP:9690"/>
        <dbReference type="ChEBI" id="CHEBI:15377"/>
        <dbReference type="ChEBI" id="CHEBI:15378"/>
        <dbReference type="ChEBI" id="CHEBI:29999"/>
        <dbReference type="ChEBI" id="CHEBI:61723"/>
        <dbReference type="ChEBI" id="CHEBI:64479"/>
        <dbReference type="EC" id="3.1.4.14"/>
    </reaction>
</comment>
<comment type="similarity">
    <text evidence="1">Belongs to the AcpH family.</text>
</comment>
<gene>
    <name evidence="1" type="primary">acpH</name>
    <name type="ordered locus">Spro_1059</name>
</gene>
<proteinExistence type="inferred from homology"/>
<name>ACPH_SERP5</name>
<reference key="1">
    <citation type="submission" date="2007-09" db="EMBL/GenBank/DDBJ databases">
        <title>Complete sequence of chromosome of Serratia proteamaculans 568.</title>
        <authorList>
            <consortium name="US DOE Joint Genome Institute"/>
            <person name="Copeland A."/>
            <person name="Lucas S."/>
            <person name="Lapidus A."/>
            <person name="Barry K."/>
            <person name="Glavina del Rio T."/>
            <person name="Dalin E."/>
            <person name="Tice H."/>
            <person name="Pitluck S."/>
            <person name="Chain P."/>
            <person name="Malfatti S."/>
            <person name="Shin M."/>
            <person name="Vergez L."/>
            <person name="Schmutz J."/>
            <person name="Larimer F."/>
            <person name="Land M."/>
            <person name="Hauser L."/>
            <person name="Kyrpides N."/>
            <person name="Kim E."/>
            <person name="Taghavi S."/>
            <person name="Newman L."/>
            <person name="Vangronsveld J."/>
            <person name="van der Lelie D."/>
            <person name="Richardson P."/>
        </authorList>
    </citation>
    <scope>NUCLEOTIDE SEQUENCE [LARGE SCALE GENOMIC DNA]</scope>
    <source>
        <strain>568</strain>
    </source>
</reference>
<organism>
    <name type="scientific">Serratia proteamaculans (strain 568)</name>
    <dbReference type="NCBI Taxonomy" id="399741"/>
    <lineage>
        <taxon>Bacteria</taxon>
        <taxon>Pseudomonadati</taxon>
        <taxon>Pseudomonadota</taxon>
        <taxon>Gammaproteobacteria</taxon>
        <taxon>Enterobacterales</taxon>
        <taxon>Yersiniaceae</taxon>
        <taxon>Serratia</taxon>
    </lineage>
</organism>
<evidence type="ECO:0000255" key="1">
    <source>
        <dbReference type="HAMAP-Rule" id="MF_01950"/>
    </source>
</evidence>
<accession>A8GAM3</accession>